<protein>
    <recommendedName>
        <fullName evidence="1">Glutamate racemase</fullName>
        <ecNumber evidence="1">5.1.1.3</ecNumber>
    </recommendedName>
</protein>
<name>MURI_YERP3</name>
<accession>A7FD15</accession>
<proteinExistence type="inferred from homology"/>
<gene>
    <name evidence="1" type="primary">murI</name>
    <name type="ordered locus">YpsIP31758_0143</name>
</gene>
<reference key="1">
    <citation type="journal article" date="2007" name="PLoS Genet.">
        <title>The complete genome sequence of Yersinia pseudotuberculosis IP31758, the causative agent of Far East scarlet-like fever.</title>
        <authorList>
            <person name="Eppinger M."/>
            <person name="Rosovitz M.J."/>
            <person name="Fricke W.F."/>
            <person name="Rasko D.A."/>
            <person name="Kokorina G."/>
            <person name="Fayolle C."/>
            <person name="Lindler L.E."/>
            <person name="Carniel E."/>
            <person name="Ravel J."/>
        </authorList>
    </citation>
    <scope>NUCLEOTIDE SEQUENCE [LARGE SCALE GENOMIC DNA]</scope>
    <source>
        <strain>IP 31758</strain>
    </source>
</reference>
<feature type="chain" id="PRO_1000059076" description="Glutamate racemase">
    <location>
        <begin position="1"/>
        <end position="287"/>
    </location>
</feature>
<feature type="region of interest" description="Disordered" evidence="2">
    <location>
        <begin position="1"/>
        <end position="25"/>
    </location>
</feature>
<feature type="compositionally biased region" description="Polar residues" evidence="2">
    <location>
        <begin position="1"/>
        <end position="15"/>
    </location>
</feature>
<feature type="active site" description="Proton donor/acceptor" evidence="1">
    <location>
        <position position="96"/>
    </location>
</feature>
<feature type="active site" description="Proton donor/acceptor" evidence="1">
    <location>
        <position position="208"/>
    </location>
</feature>
<feature type="binding site" evidence="1">
    <location>
        <begin position="32"/>
        <end position="33"/>
    </location>
    <ligand>
        <name>substrate</name>
    </ligand>
</feature>
<feature type="binding site" evidence="1">
    <location>
        <begin position="64"/>
        <end position="65"/>
    </location>
    <ligand>
        <name>substrate</name>
    </ligand>
</feature>
<feature type="binding site" evidence="1">
    <location>
        <begin position="97"/>
        <end position="98"/>
    </location>
    <ligand>
        <name>substrate</name>
    </ligand>
</feature>
<feature type="binding site" evidence="1">
    <location>
        <begin position="209"/>
        <end position="210"/>
    </location>
    <ligand>
        <name>substrate</name>
    </ligand>
</feature>
<keyword id="KW-0133">Cell shape</keyword>
<keyword id="KW-0961">Cell wall biogenesis/degradation</keyword>
<keyword id="KW-0413">Isomerase</keyword>
<keyword id="KW-0573">Peptidoglycan synthesis</keyword>
<dbReference type="EC" id="5.1.1.3" evidence="1"/>
<dbReference type="EMBL" id="CP000720">
    <property type="protein sequence ID" value="ABS46906.1"/>
    <property type="molecule type" value="Genomic_DNA"/>
</dbReference>
<dbReference type="RefSeq" id="WP_002228171.1">
    <property type="nucleotide sequence ID" value="NC_009708.1"/>
</dbReference>
<dbReference type="SMR" id="A7FD15"/>
<dbReference type="GeneID" id="57974791"/>
<dbReference type="KEGG" id="ypi:YpsIP31758_0143"/>
<dbReference type="HOGENOM" id="CLU_052344_2_0_6"/>
<dbReference type="UniPathway" id="UPA00219"/>
<dbReference type="Proteomes" id="UP000002412">
    <property type="component" value="Chromosome"/>
</dbReference>
<dbReference type="GO" id="GO:0008881">
    <property type="term" value="F:glutamate racemase activity"/>
    <property type="evidence" value="ECO:0007669"/>
    <property type="project" value="UniProtKB-UniRule"/>
</dbReference>
<dbReference type="GO" id="GO:0071555">
    <property type="term" value="P:cell wall organization"/>
    <property type="evidence" value="ECO:0007669"/>
    <property type="project" value="UniProtKB-KW"/>
</dbReference>
<dbReference type="GO" id="GO:0009252">
    <property type="term" value="P:peptidoglycan biosynthetic process"/>
    <property type="evidence" value="ECO:0007669"/>
    <property type="project" value="UniProtKB-UniRule"/>
</dbReference>
<dbReference type="GO" id="GO:0008360">
    <property type="term" value="P:regulation of cell shape"/>
    <property type="evidence" value="ECO:0007669"/>
    <property type="project" value="UniProtKB-KW"/>
</dbReference>
<dbReference type="FunFam" id="3.40.50.1860:FF:000002">
    <property type="entry name" value="Glutamate racemase"/>
    <property type="match status" value="1"/>
</dbReference>
<dbReference type="Gene3D" id="3.40.50.1860">
    <property type="match status" value="2"/>
</dbReference>
<dbReference type="HAMAP" id="MF_00258">
    <property type="entry name" value="Glu_racemase"/>
    <property type="match status" value="1"/>
</dbReference>
<dbReference type="InterPro" id="IPR015942">
    <property type="entry name" value="Asp/Glu/hydantoin_racemase"/>
</dbReference>
<dbReference type="InterPro" id="IPR001920">
    <property type="entry name" value="Asp/Glu_race"/>
</dbReference>
<dbReference type="InterPro" id="IPR018187">
    <property type="entry name" value="Asp/Glu_racemase_AS_1"/>
</dbReference>
<dbReference type="InterPro" id="IPR033134">
    <property type="entry name" value="Asp/Glu_racemase_AS_2"/>
</dbReference>
<dbReference type="InterPro" id="IPR004391">
    <property type="entry name" value="Glu_race"/>
</dbReference>
<dbReference type="NCBIfam" id="TIGR00067">
    <property type="entry name" value="glut_race"/>
    <property type="match status" value="1"/>
</dbReference>
<dbReference type="NCBIfam" id="NF002034">
    <property type="entry name" value="PRK00865.1-1"/>
    <property type="match status" value="1"/>
</dbReference>
<dbReference type="PANTHER" id="PTHR21198">
    <property type="entry name" value="GLUTAMATE RACEMASE"/>
    <property type="match status" value="1"/>
</dbReference>
<dbReference type="PANTHER" id="PTHR21198:SF2">
    <property type="entry name" value="GLUTAMATE RACEMASE"/>
    <property type="match status" value="1"/>
</dbReference>
<dbReference type="Pfam" id="PF01177">
    <property type="entry name" value="Asp_Glu_race"/>
    <property type="match status" value="1"/>
</dbReference>
<dbReference type="SUPFAM" id="SSF53681">
    <property type="entry name" value="Aspartate/glutamate racemase"/>
    <property type="match status" value="2"/>
</dbReference>
<dbReference type="PROSITE" id="PS00923">
    <property type="entry name" value="ASP_GLU_RACEMASE_1"/>
    <property type="match status" value="1"/>
</dbReference>
<dbReference type="PROSITE" id="PS00924">
    <property type="entry name" value="ASP_GLU_RACEMASE_2"/>
    <property type="match status" value="1"/>
</dbReference>
<organism>
    <name type="scientific">Yersinia pseudotuberculosis serotype O:1b (strain IP 31758)</name>
    <dbReference type="NCBI Taxonomy" id="349747"/>
    <lineage>
        <taxon>Bacteria</taxon>
        <taxon>Pseudomonadati</taxon>
        <taxon>Pseudomonadota</taxon>
        <taxon>Gammaproteobacteria</taxon>
        <taxon>Enterobacterales</taxon>
        <taxon>Yersiniaceae</taxon>
        <taxon>Yersinia</taxon>
    </lineage>
</organism>
<evidence type="ECO:0000255" key="1">
    <source>
        <dbReference type="HAMAP-Rule" id="MF_00258"/>
    </source>
</evidence>
<evidence type="ECO:0000256" key="2">
    <source>
        <dbReference type="SAM" id="MobiDB-lite"/>
    </source>
</evidence>
<comment type="function">
    <text evidence="1">Provides the (R)-glutamate required for cell wall biosynthesis.</text>
</comment>
<comment type="catalytic activity">
    <reaction evidence="1">
        <text>L-glutamate = D-glutamate</text>
        <dbReference type="Rhea" id="RHEA:12813"/>
        <dbReference type="ChEBI" id="CHEBI:29985"/>
        <dbReference type="ChEBI" id="CHEBI:29986"/>
        <dbReference type="EC" id="5.1.1.3"/>
    </reaction>
</comment>
<comment type="pathway">
    <text evidence="1">Cell wall biogenesis; peptidoglycan biosynthesis.</text>
</comment>
<comment type="similarity">
    <text evidence="1">Belongs to the aspartate/glutamate racemases family.</text>
</comment>
<sequence length="287" mass="31266">MATKPQDANTTSREAITSKADSPPRPTALIFDSGVGGLSVYQEIRQLLPDLHYIYAFDNVAFPYGEKSGEFIVERVLEIVTAVQQRHPLAIVVIACNTASTVSLPALRERFAFPVVGVVPAIKPAVRLTRNGVVGLLATRATVHASYTLDLIARFATDCKIELLGSSELVEVAETKLHGGVVPLEVLKKILHPWLSMREPPDTIVLGCTHFPLLTEELAQVLPEGTRMVDSGAAIARRTAWLISSQENVISSQDENIAYCMALDEDTDALLPVLQSYGFPKLQKLPI</sequence>